<gene>
    <name evidence="2" type="primary">ssuD</name>
    <name type="ordered locus">Z1283</name>
    <name type="ordered locus">ECs1018</name>
</gene>
<keyword id="KW-0285">Flavoprotein</keyword>
<keyword id="KW-0288">FMN</keyword>
<keyword id="KW-0503">Monooxygenase</keyword>
<keyword id="KW-0560">Oxidoreductase</keyword>
<keyword id="KW-1185">Reference proteome</keyword>
<reference key="1">
    <citation type="journal article" date="2001" name="Nature">
        <title>Genome sequence of enterohaemorrhagic Escherichia coli O157:H7.</title>
        <authorList>
            <person name="Perna N.T."/>
            <person name="Plunkett G. III"/>
            <person name="Burland V."/>
            <person name="Mau B."/>
            <person name="Glasner J.D."/>
            <person name="Rose D.J."/>
            <person name="Mayhew G.F."/>
            <person name="Evans P.S."/>
            <person name="Gregor J."/>
            <person name="Kirkpatrick H.A."/>
            <person name="Posfai G."/>
            <person name="Hackett J."/>
            <person name="Klink S."/>
            <person name="Boutin A."/>
            <person name="Shao Y."/>
            <person name="Miller L."/>
            <person name="Grotbeck E.J."/>
            <person name="Davis N.W."/>
            <person name="Lim A."/>
            <person name="Dimalanta E.T."/>
            <person name="Potamousis K."/>
            <person name="Apodaca J."/>
            <person name="Anantharaman T.S."/>
            <person name="Lin J."/>
            <person name="Yen G."/>
            <person name="Schwartz D.C."/>
            <person name="Welch R.A."/>
            <person name="Blattner F.R."/>
        </authorList>
    </citation>
    <scope>NUCLEOTIDE SEQUENCE [LARGE SCALE GENOMIC DNA]</scope>
    <source>
        <strain>O157:H7 / EDL933 / ATCC 700927 / EHEC</strain>
    </source>
</reference>
<reference key="2">
    <citation type="journal article" date="2001" name="DNA Res.">
        <title>Complete genome sequence of enterohemorrhagic Escherichia coli O157:H7 and genomic comparison with a laboratory strain K-12.</title>
        <authorList>
            <person name="Hayashi T."/>
            <person name="Makino K."/>
            <person name="Ohnishi M."/>
            <person name="Kurokawa K."/>
            <person name="Ishii K."/>
            <person name="Yokoyama K."/>
            <person name="Han C.-G."/>
            <person name="Ohtsubo E."/>
            <person name="Nakayama K."/>
            <person name="Murata T."/>
            <person name="Tanaka M."/>
            <person name="Tobe T."/>
            <person name="Iida T."/>
            <person name="Takami H."/>
            <person name="Honda T."/>
            <person name="Sasakawa C."/>
            <person name="Ogasawara N."/>
            <person name="Yasunaga T."/>
            <person name="Kuhara S."/>
            <person name="Shiba T."/>
            <person name="Hattori M."/>
            <person name="Shinagawa H."/>
        </authorList>
    </citation>
    <scope>NUCLEOTIDE SEQUENCE [LARGE SCALE GENOMIC DNA]</scope>
    <source>
        <strain>O157:H7 / Sakai / RIMD 0509952 / EHEC</strain>
    </source>
</reference>
<proteinExistence type="inferred from homology"/>
<sequence>MSLNMFWFLPTHGDGHYLGTEEGSRPVDHGYLQQIAQAADRLGYTGVLIPTGRSCEDAWLVAASMIPVTQRLKFLVALRPSVTSPTVAARQAATLDRLSNGRALFNLVTGSDPQELAGDGVFLDHSERYEASAEFTQVWRRLLLGETVDFNGKHIHVRGAKLLFPPIQQPYPPLYFGGSSDVAQELAAEQVDLYLTWGEPPELVKEKIEQVRAKAAAHGRKIRFGIRLHVIVRETNDEAWQAAERLISHLDDETIAKAQAAFARTDSVGQQRMAALHNGKRDNLEISPNLWAGVGLVRGGAGTALVGDGPTVAARINEYAALGIDSFVLSGYPHLEEAYRVGELLFPHLDVAIPEIPQPQPLNPQGEAVENDFIPRRVAQS</sequence>
<protein>
    <recommendedName>
        <fullName evidence="2">Alkanesulfonate monooxygenase</fullName>
        <ecNumber evidence="2">1.14.14.5</ecNumber>
    </recommendedName>
    <alternativeName>
        <fullName evidence="2">FMNH2-dependent aliphatic sulfonate monooxygenase</fullName>
    </alternativeName>
</protein>
<evidence type="ECO:0000250" key="1"/>
<evidence type="ECO:0000255" key="2">
    <source>
        <dbReference type="HAMAP-Rule" id="MF_01229"/>
    </source>
</evidence>
<name>SSUD_ECO57</name>
<accession>Q8XDD9</accession>
<feature type="initiator methionine" description="Removed" evidence="1">
    <location>
        <position position="1"/>
    </location>
</feature>
<feature type="chain" id="PRO_0000216708" description="Alkanesulfonate monooxygenase">
    <location>
        <begin position="2"/>
        <end position="381"/>
    </location>
</feature>
<organism>
    <name type="scientific">Escherichia coli O157:H7</name>
    <dbReference type="NCBI Taxonomy" id="83334"/>
    <lineage>
        <taxon>Bacteria</taxon>
        <taxon>Pseudomonadati</taxon>
        <taxon>Pseudomonadota</taxon>
        <taxon>Gammaproteobacteria</taxon>
        <taxon>Enterobacterales</taxon>
        <taxon>Enterobacteriaceae</taxon>
        <taxon>Escherichia</taxon>
    </lineage>
</organism>
<comment type="function">
    <text evidence="2">Catalyzes the desulfonation of aliphatic sulfonates.</text>
</comment>
<comment type="catalytic activity">
    <reaction evidence="2">
        <text>an alkanesulfonate + FMNH2 + O2 = an aldehyde + FMN + sulfite + H2O + 2 H(+)</text>
        <dbReference type="Rhea" id="RHEA:23064"/>
        <dbReference type="ChEBI" id="CHEBI:15377"/>
        <dbReference type="ChEBI" id="CHEBI:15378"/>
        <dbReference type="ChEBI" id="CHEBI:15379"/>
        <dbReference type="ChEBI" id="CHEBI:17359"/>
        <dbReference type="ChEBI" id="CHEBI:17478"/>
        <dbReference type="ChEBI" id="CHEBI:57618"/>
        <dbReference type="ChEBI" id="CHEBI:58210"/>
        <dbReference type="ChEBI" id="CHEBI:134249"/>
        <dbReference type="EC" id="1.14.14.5"/>
    </reaction>
</comment>
<comment type="subunit">
    <text evidence="2">Homotetramer.</text>
</comment>
<comment type="miscellaneous">
    <text evidence="2">FMNH(2) which is absolutely required for this enzymatic reaction, is provided by SsuE.</text>
</comment>
<comment type="similarity">
    <text evidence="2">Belongs to the SsuD family.</text>
</comment>
<dbReference type="EC" id="1.14.14.5" evidence="2"/>
<dbReference type="EMBL" id="AE005174">
    <property type="protein sequence ID" value="AAG55420.1"/>
    <property type="molecule type" value="Genomic_DNA"/>
</dbReference>
<dbReference type="EMBL" id="BA000007">
    <property type="protein sequence ID" value="BAB34441.1"/>
    <property type="molecule type" value="Genomic_DNA"/>
</dbReference>
<dbReference type="PIR" id="B90756">
    <property type="entry name" value="B90756"/>
</dbReference>
<dbReference type="PIR" id="H85619">
    <property type="entry name" value="H85619"/>
</dbReference>
<dbReference type="RefSeq" id="NP_309045.1">
    <property type="nucleotide sequence ID" value="NC_002695.1"/>
</dbReference>
<dbReference type="RefSeq" id="WP_000055981.1">
    <property type="nucleotide sequence ID" value="NZ_VOAI01000006.1"/>
</dbReference>
<dbReference type="SMR" id="Q8XDD9"/>
<dbReference type="STRING" id="155864.Z1283"/>
<dbReference type="GeneID" id="917762"/>
<dbReference type="KEGG" id="ece:Z1283"/>
<dbReference type="KEGG" id="ecs:ECs_1018"/>
<dbReference type="PATRIC" id="fig|386585.9.peg.1140"/>
<dbReference type="eggNOG" id="COG2141">
    <property type="taxonomic scope" value="Bacteria"/>
</dbReference>
<dbReference type="HOGENOM" id="CLU_027853_1_0_6"/>
<dbReference type="OMA" id="SCEDPWL"/>
<dbReference type="Proteomes" id="UP000000558">
    <property type="component" value="Chromosome"/>
</dbReference>
<dbReference type="Proteomes" id="UP000002519">
    <property type="component" value="Chromosome"/>
</dbReference>
<dbReference type="GO" id="GO:0008726">
    <property type="term" value="F:alkanesulfonate monooxygenase activity"/>
    <property type="evidence" value="ECO:0007669"/>
    <property type="project" value="UniProtKB-UniRule"/>
</dbReference>
<dbReference type="GO" id="GO:0046306">
    <property type="term" value="P:alkanesulfonate catabolic process"/>
    <property type="evidence" value="ECO:0007669"/>
    <property type="project" value="TreeGrafter"/>
</dbReference>
<dbReference type="CDD" id="cd01094">
    <property type="entry name" value="Alkanesulfonate_monoxygenase"/>
    <property type="match status" value="1"/>
</dbReference>
<dbReference type="FunFam" id="3.20.20.30:FF:000001">
    <property type="entry name" value="Alkanesulfonate monooxygenase"/>
    <property type="match status" value="1"/>
</dbReference>
<dbReference type="Gene3D" id="3.20.20.30">
    <property type="entry name" value="Luciferase-like domain"/>
    <property type="match status" value="1"/>
</dbReference>
<dbReference type="HAMAP" id="MF_01229">
    <property type="entry name" value="Alkanesulf_monooxygen"/>
    <property type="match status" value="1"/>
</dbReference>
<dbReference type="InterPro" id="IPR019911">
    <property type="entry name" value="Alkanesulphonate_mOase_FMN-dep"/>
</dbReference>
<dbReference type="InterPro" id="IPR011251">
    <property type="entry name" value="Luciferase-like_dom"/>
</dbReference>
<dbReference type="InterPro" id="IPR036661">
    <property type="entry name" value="Luciferase-like_sf"/>
</dbReference>
<dbReference type="InterPro" id="IPR050172">
    <property type="entry name" value="SsuD_RutA_monooxygenase"/>
</dbReference>
<dbReference type="NCBIfam" id="TIGR03565">
    <property type="entry name" value="alk_sulf_monoox"/>
    <property type="match status" value="1"/>
</dbReference>
<dbReference type="NCBIfam" id="NF001939">
    <property type="entry name" value="PRK00719.1"/>
    <property type="match status" value="1"/>
</dbReference>
<dbReference type="PANTHER" id="PTHR42847">
    <property type="entry name" value="ALKANESULFONATE MONOOXYGENASE"/>
    <property type="match status" value="1"/>
</dbReference>
<dbReference type="PANTHER" id="PTHR42847:SF4">
    <property type="entry name" value="ALKANESULFONATE MONOOXYGENASE-RELATED"/>
    <property type="match status" value="1"/>
</dbReference>
<dbReference type="Pfam" id="PF00296">
    <property type="entry name" value="Bac_luciferase"/>
    <property type="match status" value="1"/>
</dbReference>
<dbReference type="SUPFAM" id="SSF51679">
    <property type="entry name" value="Bacterial luciferase-like"/>
    <property type="match status" value="1"/>
</dbReference>